<gene>
    <name evidence="1" type="primary">pcp</name>
    <name type="ordered locus">VPA0587</name>
</gene>
<comment type="function">
    <text evidence="1">Removes 5-oxoproline from various penultimate amino acid residues except L-proline.</text>
</comment>
<comment type="catalytic activity">
    <reaction evidence="1">
        <text>Release of an N-terminal pyroglutamyl group from a polypeptide, the second amino acid generally not being Pro.</text>
        <dbReference type="EC" id="3.4.19.3"/>
    </reaction>
</comment>
<comment type="subunit">
    <text evidence="1">Homotetramer.</text>
</comment>
<comment type="subcellular location">
    <subcellularLocation>
        <location evidence="1">Cytoplasm</location>
    </subcellularLocation>
</comment>
<comment type="similarity">
    <text evidence="1">Belongs to the peptidase C15 family.</text>
</comment>
<dbReference type="EC" id="3.4.19.3" evidence="1"/>
<dbReference type="EMBL" id="BA000032">
    <property type="protein sequence ID" value="BAC61930.1"/>
    <property type="molecule type" value="Genomic_DNA"/>
</dbReference>
<dbReference type="RefSeq" id="NP_800097.1">
    <property type="nucleotide sequence ID" value="NC_004605.1"/>
</dbReference>
<dbReference type="RefSeq" id="WP_005482616.1">
    <property type="nucleotide sequence ID" value="NC_004605.1"/>
</dbReference>
<dbReference type="SMR" id="Q87IL9"/>
<dbReference type="MEROPS" id="C15.001"/>
<dbReference type="GeneID" id="1191275"/>
<dbReference type="KEGG" id="vpa:VPA0587"/>
<dbReference type="PATRIC" id="fig|223926.6.peg.3528"/>
<dbReference type="eggNOG" id="COG2039">
    <property type="taxonomic scope" value="Bacteria"/>
</dbReference>
<dbReference type="HOGENOM" id="CLU_043960_4_0_6"/>
<dbReference type="Proteomes" id="UP000002493">
    <property type="component" value="Chromosome 2"/>
</dbReference>
<dbReference type="GO" id="GO:0005829">
    <property type="term" value="C:cytosol"/>
    <property type="evidence" value="ECO:0007669"/>
    <property type="project" value="InterPro"/>
</dbReference>
<dbReference type="GO" id="GO:0016920">
    <property type="term" value="F:pyroglutamyl-peptidase activity"/>
    <property type="evidence" value="ECO:0007669"/>
    <property type="project" value="UniProtKB-UniRule"/>
</dbReference>
<dbReference type="GO" id="GO:0006508">
    <property type="term" value="P:proteolysis"/>
    <property type="evidence" value="ECO:0007669"/>
    <property type="project" value="UniProtKB-KW"/>
</dbReference>
<dbReference type="CDD" id="cd00501">
    <property type="entry name" value="Peptidase_C15"/>
    <property type="match status" value="1"/>
</dbReference>
<dbReference type="FunFam" id="3.40.630.20:FF:000001">
    <property type="entry name" value="Pyrrolidone-carboxylate peptidase"/>
    <property type="match status" value="1"/>
</dbReference>
<dbReference type="Gene3D" id="3.40.630.20">
    <property type="entry name" value="Peptidase C15, pyroglutamyl peptidase I-like"/>
    <property type="match status" value="1"/>
</dbReference>
<dbReference type="HAMAP" id="MF_00417">
    <property type="entry name" value="Pyrrolid_peptidase"/>
    <property type="match status" value="1"/>
</dbReference>
<dbReference type="InterPro" id="IPR000816">
    <property type="entry name" value="Peptidase_C15"/>
</dbReference>
<dbReference type="InterPro" id="IPR016125">
    <property type="entry name" value="Peptidase_C15-like"/>
</dbReference>
<dbReference type="InterPro" id="IPR036440">
    <property type="entry name" value="Peptidase_C15-like_sf"/>
</dbReference>
<dbReference type="InterPro" id="IPR029762">
    <property type="entry name" value="PGP-I_bact-type"/>
</dbReference>
<dbReference type="InterPro" id="IPR033694">
    <property type="entry name" value="PGPEP1_Cys_AS"/>
</dbReference>
<dbReference type="InterPro" id="IPR033693">
    <property type="entry name" value="PGPEP1_Glu_AS"/>
</dbReference>
<dbReference type="NCBIfam" id="NF009676">
    <property type="entry name" value="PRK13197.1"/>
    <property type="match status" value="1"/>
</dbReference>
<dbReference type="NCBIfam" id="TIGR00504">
    <property type="entry name" value="pyro_pdase"/>
    <property type="match status" value="1"/>
</dbReference>
<dbReference type="PANTHER" id="PTHR23402">
    <property type="entry name" value="PROTEASE FAMILY C15 PYROGLUTAMYL-PEPTIDASE I-RELATED"/>
    <property type="match status" value="1"/>
</dbReference>
<dbReference type="PANTHER" id="PTHR23402:SF1">
    <property type="entry name" value="PYROGLUTAMYL-PEPTIDASE I"/>
    <property type="match status" value="1"/>
</dbReference>
<dbReference type="Pfam" id="PF01470">
    <property type="entry name" value="Peptidase_C15"/>
    <property type="match status" value="1"/>
</dbReference>
<dbReference type="PIRSF" id="PIRSF015592">
    <property type="entry name" value="Prld-crbxl_pptds"/>
    <property type="match status" value="1"/>
</dbReference>
<dbReference type="PRINTS" id="PR00706">
    <property type="entry name" value="PYROGLUPTASE"/>
</dbReference>
<dbReference type="SUPFAM" id="SSF53182">
    <property type="entry name" value="Pyrrolidone carboxyl peptidase (pyroglutamate aminopeptidase)"/>
    <property type="match status" value="1"/>
</dbReference>
<dbReference type="PROSITE" id="PS01334">
    <property type="entry name" value="PYRASE_CYS"/>
    <property type="match status" value="1"/>
</dbReference>
<dbReference type="PROSITE" id="PS01333">
    <property type="entry name" value="PYRASE_GLU"/>
    <property type="match status" value="1"/>
</dbReference>
<feature type="chain" id="PRO_0000184749" description="Pyrrolidone-carboxylate peptidase">
    <location>
        <begin position="1"/>
        <end position="212"/>
    </location>
</feature>
<feature type="active site" evidence="1">
    <location>
        <position position="80"/>
    </location>
</feature>
<feature type="active site" evidence="1">
    <location>
        <position position="143"/>
    </location>
</feature>
<feature type="active site" evidence="1">
    <location>
        <position position="165"/>
    </location>
</feature>
<organism>
    <name type="scientific">Vibrio parahaemolyticus serotype O3:K6 (strain RIMD 2210633)</name>
    <dbReference type="NCBI Taxonomy" id="223926"/>
    <lineage>
        <taxon>Bacteria</taxon>
        <taxon>Pseudomonadati</taxon>
        <taxon>Pseudomonadota</taxon>
        <taxon>Gammaproteobacteria</taxon>
        <taxon>Vibrionales</taxon>
        <taxon>Vibrionaceae</taxon>
        <taxon>Vibrio</taxon>
    </lineage>
</organism>
<keyword id="KW-0963">Cytoplasm</keyword>
<keyword id="KW-0378">Hydrolase</keyword>
<keyword id="KW-0645">Protease</keyword>
<keyword id="KW-0788">Thiol protease</keyword>
<accession>Q87IL9</accession>
<protein>
    <recommendedName>
        <fullName evidence="1">Pyrrolidone-carboxylate peptidase</fullName>
        <ecNumber evidence="1">3.4.19.3</ecNumber>
    </recommendedName>
    <alternativeName>
        <fullName evidence="1">5-oxoprolyl-peptidase</fullName>
    </alternativeName>
    <alternativeName>
        <fullName evidence="1">Pyroglutamyl-peptidase I</fullName>
        <shortName evidence="1">PGP-I</shortName>
        <shortName evidence="1">Pyrase</shortName>
    </alternativeName>
</protein>
<reference key="1">
    <citation type="journal article" date="2003" name="Lancet">
        <title>Genome sequence of Vibrio parahaemolyticus: a pathogenic mechanism distinct from that of V. cholerae.</title>
        <authorList>
            <person name="Makino K."/>
            <person name="Oshima K."/>
            <person name="Kurokawa K."/>
            <person name="Yokoyama K."/>
            <person name="Uda T."/>
            <person name="Tagomori K."/>
            <person name="Iijima Y."/>
            <person name="Najima M."/>
            <person name="Nakano M."/>
            <person name="Yamashita A."/>
            <person name="Kubota Y."/>
            <person name="Kimura S."/>
            <person name="Yasunaga T."/>
            <person name="Honda T."/>
            <person name="Shinagawa H."/>
            <person name="Hattori M."/>
            <person name="Iida T."/>
        </authorList>
    </citation>
    <scope>NUCLEOTIDE SEQUENCE [LARGE SCALE GENOMIC DNA]</scope>
    <source>
        <strain>RIMD 2210633</strain>
    </source>
</reference>
<sequence>MKKVLITGFEPFGGDAINPALEAVKRLEETSLDGGIIVTCQVPVTRFESISAVIDAIEAYQPDCVITVGQAAGRAAITPERVAINVDDFRIPDNGGNQPIDEPIIEQGPDAYFSSLPIKRIAQTLHESGIPCQVSNSAGTFVCNHLFYGVQHYLRDKSIRHGFVHIPLLPEQATDGNHPSMSLDMIVAGLKLVAQVVIDHESDVVVSGGQIC</sequence>
<proteinExistence type="inferred from homology"/>
<name>PCP_VIBPA</name>
<evidence type="ECO:0000255" key="1">
    <source>
        <dbReference type="HAMAP-Rule" id="MF_00417"/>
    </source>
</evidence>